<proteinExistence type="inferred from homology"/>
<dbReference type="EMBL" id="CP001071">
    <property type="protein sequence ID" value="ACD03940.1"/>
    <property type="molecule type" value="Genomic_DNA"/>
</dbReference>
<dbReference type="RefSeq" id="WP_012419155.1">
    <property type="nucleotide sequence ID" value="NZ_CP071807.1"/>
</dbReference>
<dbReference type="SMR" id="B2ULP6"/>
<dbReference type="STRING" id="349741.Amuc_0095"/>
<dbReference type="PaxDb" id="349741-Amuc_0095"/>
<dbReference type="GeneID" id="60879525"/>
<dbReference type="KEGG" id="amu:Amuc_0095"/>
<dbReference type="eggNOG" id="COG0267">
    <property type="taxonomic scope" value="Bacteria"/>
</dbReference>
<dbReference type="HOGENOM" id="CLU_190949_3_0_0"/>
<dbReference type="OrthoDB" id="197660at2"/>
<dbReference type="BioCyc" id="AMUC349741:G1GBX-116-MONOMER"/>
<dbReference type="Proteomes" id="UP000001031">
    <property type="component" value="Chromosome"/>
</dbReference>
<dbReference type="GO" id="GO:0005737">
    <property type="term" value="C:cytoplasm"/>
    <property type="evidence" value="ECO:0007669"/>
    <property type="project" value="UniProtKB-ARBA"/>
</dbReference>
<dbReference type="GO" id="GO:1990904">
    <property type="term" value="C:ribonucleoprotein complex"/>
    <property type="evidence" value="ECO:0007669"/>
    <property type="project" value="UniProtKB-KW"/>
</dbReference>
<dbReference type="GO" id="GO:0005840">
    <property type="term" value="C:ribosome"/>
    <property type="evidence" value="ECO:0007669"/>
    <property type="project" value="UniProtKB-KW"/>
</dbReference>
<dbReference type="GO" id="GO:0003735">
    <property type="term" value="F:structural constituent of ribosome"/>
    <property type="evidence" value="ECO:0007669"/>
    <property type="project" value="InterPro"/>
</dbReference>
<dbReference type="GO" id="GO:0006412">
    <property type="term" value="P:translation"/>
    <property type="evidence" value="ECO:0007669"/>
    <property type="project" value="UniProtKB-UniRule"/>
</dbReference>
<dbReference type="Gene3D" id="2.20.28.120">
    <property type="entry name" value="Ribosomal protein L33"/>
    <property type="match status" value="1"/>
</dbReference>
<dbReference type="HAMAP" id="MF_00294">
    <property type="entry name" value="Ribosomal_bL33"/>
    <property type="match status" value="1"/>
</dbReference>
<dbReference type="InterPro" id="IPR001705">
    <property type="entry name" value="Ribosomal_bL33"/>
</dbReference>
<dbReference type="InterPro" id="IPR038584">
    <property type="entry name" value="Ribosomal_bL33_sf"/>
</dbReference>
<dbReference type="InterPro" id="IPR011332">
    <property type="entry name" value="Ribosomal_zn-bd"/>
</dbReference>
<dbReference type="NCBIfam" id="NF001860">
    <property type="entry name" value="PRK00595.1"/>
    <property type="match status" value="1"/>
</dbReference>
<dbReference type="NCBIfam" id="TIGR01023">
    <property type="entry name" value="rpmG_bact"/>
    <property type="match status" value="1"/>
</dbReference>
<dbReference type="PANTHER" id="PTHR43168">
    <property type="entry name" value="50S RIBOSOMAL PROTEIN L33, CHLOROPLASTIC"/>
    <property type="match status" value="1"/>
</dbReference>
<dbReference type="PANTHER" id="PTHR43168:SF2">
    <property type="entry name" value="LARGE RIBOSOMAL SUBUNIT PROTEIN BL33C"/>
    <property type="match status" value="1"/>
</dbReference>
<dbReference type="Pfam" id="PF00471">
    <property type="entry name" value="Ribosomal_L33"/>
    <property type="match status" value="1"/>
</dbReference>
<dbReference type="SUPFAM" id="SSF57829">
    <property type="entry name" value="Zn-binding ribosomal proteins"/>
    <property type="match status" value="1"/>
</dbReference>
<comment type="similarity">
    <text evidence="1">Belongs to the bacterial ribosomal protein bL33 family.</text>
</comment>
<evidence type="ECO:0000255" key="1">
    <source>
        <dbReference type="HAMAP-Rule" id="MF_00294"/>
    </source>
</evidence>
<evidence type="ECO:0000305" key="2"/>
<feature type="chain" id="PRO_0000356366" description="Large ribosomal subunit protein bL33">
    <location>
        <begin position="1"/>
        <end position="57"/>
    </location>
</feature>
<reference key="1">
    <citation type="journal article" date="2011" name="PLoS ONE">
        <title>The genome of Akkermansia muciniphila, a dedicated intestinal mucin degrader, and its use in exploring intestinal metagenomes.</title>
        <authorList>
            <person name="van Passel M.W."/>
            <person name="Kant R."/>
            <person name="Zoetendal E.G."/>
            <person name="Plugge C.M."/>
            <person name="Derrien M."/>
            <person name="Malfatti S.A."/>
            <person name="Chain P.S."/>
            <person name="Woyke T."/>
            <person name="Palva A."/>
            <person name="de Vos W.M."/>
            <person name="Smidt H."/>
        </authorList>
    </citation>
    <scope>NUCLEOTIDE SEQUENCE [LARGE SCALE GENOMIC DNA]</scope>
    <source>
        <strain>ATCC BAA-835 / DSM 22959 / JCM 33894 / BCRC 81048 / CCUG 64013 / CIP 107961 / Muc</strain>
    </source>
</reference>
<accession>B2ULP6</accession>
<sequence>MPRDIIILECTEAKAEGKPTSRYVTTRNKKSLRTPGRLEKIKYNPFLKRRTLHREMR</sequence>
<name>RL33_AKKM8</name>
<organism>
    <name type="scientific">Akkermansia muciniphila (strain ATCC BAA-835 / DSM 22959 / JCM 33894 / BCRC 81048 / CCUG 64013 / CIP 107961 / Muc)</name>
    <dbReference type="NCBI Taxonomy" id="349741"/>
    <lineage>
        <taxon>Bacteria</taxon>
        <taxon>Pseudomonadati</taxon>
        <taxon>Verrucomicrobiota</taxon>
        <taxon>Verrucomicrobiia</taxon>
        <taxon>Verrucomicrobiales</taxon>
        <taxon>Akkermansiaceae</taxon>
        <taxon>Akkermansia</taxon>
    </lineage>
</organism>
<keyword id="KW-1185">Reference proteome</keyword>
<keyword id="KW-0687">Ribonucleoprotein</keyword>
<keyword id="KW-0689">Ribosomal protein</keyword>
<protein>
    <recommendedName>
        <fullName evidence="1">Large ribosomal subunit protein bL33</fullName>
    </recommendedName>
    <alternativeName>
        <fullName evidence="2">50S ribosomal protein L33</fullName>
    </alternativeName>
</protein>
<gene>
    <name evidence="1" type="primary">rpmG</name>
    <name type="ordered locus">Amuc_0095</name>
</gene>